<keyword id="KW-0963">Cytoplasm</keyword>
<keyword id="KW-0342">GTP-binding</keyword>
<keyword id="KW-0547">Nucleotide-binding</keyword>
<keyword id="KW-0648">Protein biosynthesis</keyword>
<keyword id="KW-1185">Reference proteome</keyword>
<reference key="1">
    <citation type="journal article" date="2002" name="Proc. Natl. Acad. Sci. U.S.A.">
        <title>Extensive mosaic structure revealed by the complete genome sequence of uropathogenic Escherichia coli.</title>
        <authorList>
            <person name="Welch R.A."/>
            <person name="Burland V."/>
            <person name="Plunkett G. III"/>
            <person name="Redford P."/>
            <person name="Roesch P."/>
            <person name="Rasko D."/>
            <person name="Buckles E.L."/>
            <person name="Liou S.-R."/>
            <person name="Boutin A."/>
            <person name="Hackett J."/>
            <person name="Stroud D."/>
            <person name="Mayhew G.F."/>
            <person name="Rose D.J."/>
            <person name="Zhou S."/>
            <person name="Schwartz D.C."/>
            <person name="Perna N.T."/>
            <person name="Mobley H.L.T."/>
            <person name="Donnenberg M.S."/>
            <person name="Blattner F.R."/>
        </authorList>
    </citation>
    <scope>NUCLEOTIDE SEQUENCE [LARGE SCALE GENOMIC DNA]</scope>
    <source>
        <strain>CFT073 / ATCC 700928 / UPEC</strain>
    </source>
</reference>
<name>RF3_ECOL6</name>
<evidence type="ECO:0000250" key="1"/>
<evidence type="ECO:0000305" key="2"/>
<accession>P0A7I5</accession>
<accession>P33998</accession>
<organism>
    <name type="scientific">Escherichia coli O6:H1 (strain CFT073 / ATCC 700928 / UPEC)</name>
    <dbReference type="NCBI Taxonomy" id="199310"/>
    <lineage>
        <taxon>Bacteria</taxon>
        <taxon>Pseudomonadati</taxon>
        <taxon>Pseudomonadota</taxon>
        <taxon>Gammaproteobacteria</taxon>
        <taxon>Enterobacterales</taxon>
        <taxon>Enterobacteriaceae</taxon>
        <taxon>Escherichia</taxon>
    </lineage>
</organism>
<comment type="function">
    <text evidence="1">Increases the formation of ribosomal termination complexes and stimulates activities of RF-1 and RF-2. It binds guanine nucleotides and has strong preference for UGA stop codons. It may interact directly with the ribosome. The stimulation of RF-1 and RF-2 is significantly reduced by GTP and GDP, but not by GMP (By similarity).</text>
</comment>
<comment type="subcellular location">
    <subcellularLocation>
        <location evidence="1">Cytoplasm</location>
    </subcellularLocation>
</comment>
<comment type="similarity">
    <text evidence="2">Belongs to the TRAFAC class translation factor GTPase superfamily. Classic translation factor GTPase family. PrfC subfamily.</text>
</comment>
<feature type="initiator methionine" description="Removed" evidence="1">
    <location>
        <position position="1"/>
    </location>
</feature>
<feature type="chain" id="PRO_0000210940" description="Peptide chain release factor 3">
    <location>
        <begin position="2"/>
        <end position="529"/>
    </location>
</feature>
<feature type="domain" description="tr-type G">
    <location>
        <begin position="11"/>
        <end position="280"/>
    </location>
</feature>
<feature type="binding site" evidence="1">
    <location>
        <begin position="20"/>
        <end position="27"/>
    </location>
    <ligand>
        <name>GTP</name>
        <dbReference type="ChEBI" id="CHEBI:37565"/>
    </ligand>
</feature>
<feature type="binding site" evidence="1">
    <location>
        <begin position="88"/>
        <end position="92"/>
    </location>
    <ligand>
        <name>GTP</name>
        <dbReference type="ChEBI" id="CHEBI:37565"/>
    </ligand>
</feature>
<feature type="binding site" evidence="1">
    <location>
        <begin position="142"/>
        <end position="145"/>
    </location>
    <ligand>
        <name>GTP</name>
        <dbReference type="ChEBI" id="CHEBI:37565"/>
    </ligand>
</feature>
<proteinExistence type="inferred from homology"/>
<dbReference type="EMBL" id="AE014075">
    <property type="protein sequence ID" value="AAN83876.1"/>
    <property type="molecule type" value="Genomic_DNA"/>
</dbReference>
<dbReference type="RefSeq" id="WP_000175940.1">
    <property type="nucleotide sequence ID" value="NZ_CP051263.1"/>
</dbReference>
<dbReference type="SMR" id="P0A7I5"/>
<dbReference type="STRING" id="199310.c5456"/>
<dbReference type="KEGG" id="ecc:c5456"/>
<dbReference type="eggNOG" id="COG4108">
    <property type="taxonomic scope" value="Bacteria"/>
</dbReference>
<dbReference type="HOGENOM" id="CLU_002794_2_1_6"/>
<dbReference type="BioCyc" id="ECOL199310:C5456-MONOMER"/>
<dbReference type="Proteomes" id="UP000001410">
    <property type="component" value="Chromosome"/>
</dbReference>
<dbReference type="GO" id="GO:0005829">
    <property type="term" value="C:cytosol"/>
    <property type="evidence" value="ECO:0007669"/>
    <property type="project" value="TreeGrafter"/>
</dbReference>
<dbReference type="GO" id="GO:0005525">
    <property type="term" value="F:GTP binding"/>
    <property type="evidence" value="ECO:0007669"/>
    <property type="project" value="UniProtKB-UniRule"/>
</dbReference>
<dbReference type="GO" id="GO:0003924">
    <property type="term" value="F:GTPase activity"/>
    <property type="evidence" value="ECO:0007669"/>
    <property type="project" value="InterPro"/>
</dbReference>
<dbReference type="GO" id="GO:0097216">
    <property type="term" value="F:guanosine tetraphosphate binding"/>
    <property type="evidence" value="ECO:0007669"/>
    <property type="project" value="UniProtKB-ARBA"/>
</dbReference>
<dbReference type="GO" id="GO:0016150">
    <property type="term" value="F:translation release factor activity, codon nonspecific"/>
    <property type="evidence" value="ECO:0007669"/>
    <property type="project" value="TreeGrafter"/>
</dbReference>
<dbReference type="GO" id="GO:0016149">
    <property type="term" value="F:translation release factor activity, codon specific"/>
    <property type="evidence" value="ECO:0007669"/>
    <property type="project" value="UniProtKB-UniRule"/>
</dbReference>
<dbReference type="GO" id="GO:0006449">
    <property type="term" value="P:regulation of translational termination"/>
    <property type="evidence" value="ECO:0007669"/>
    <property type="project" value="UniProtKB-UniRule"/>
</dbReference>
<dbReference type="CDD" id="cd04169">
    <property type="entry name" value="RF3"/>
    <property type="match status" value="1"/>
</dbReference>
<dbReference type="CDD" id="cd03689">
    <property type="entry name" value="RF3_II"/>
    <property type="match status" value="1"/>
</dbReference>
<dbReference type="CDD" id="cd16259">
    <property type="entry name" value="RF3_III"/>
    <property type="match status" value="1"/>
</dbReference>
<dbReference type="FunFam" id="2.40.30.10:FF:000040">
    <property type="entry name" value="Peptide chain release factor 3"/>
    <property type="match status" value="1"/>
</dbReference>
<dbReference type="FunFam" id="3.30.70.3280:FF:000001">
    <property type="entry name" value="Peptide chain release factor 3"/>
    <property type="match status" value="1"/>
</dbReference>
<dbReference type="FunFam" id="3.40.50.300:FF:000184">
    <property type="entry name" value="Peptide chain release factor 3"/>
    <property type="match status" value="1"/>
</dbReference>
<dbReference type="FunFam" id="3.40.50.300:FF:000253">
    <property type="entry name" value="Peptide chain release factor 3"/>
    <property type="match status" value="1"/>
</dbReference>
<dbReference type="Gene3D" id="3.40.50.300">
    <property type="entry name" value="P-loop containing nucleotide triphosphate hydrolases"/>
    <property type="match status" value="3"/>
</dbReference>
<dbReference type="Gene3D" id="3.30.70.3280">
    <property type="entry name" value="Peptide chain release factor 3, domain III"/>
    <property type="match status" value="1"/>
</dbReference>
<dbReference type="HAMAP" id="MF_00072">
    <property type="entry name" value="Rel_fac_3"/>
    <property type="match status" value="1"/>
</dbReference>
<dbReference type="InterPro" id="IPR053905">
    <property type="entry name" value="EF-G-like_DII"/>
</dbReference>
<dbReference type="InterPro" id="IPR035647">
    <property type="entry name" value="EFG_III/V"/>
</dbReference>
<dbReference type="InterPro" id="IPR031157">
    <property type="entry name" value="G_TR_CS"/>
</dbReference>
<dbReference type="InterPro" id="IPR027417">
    <property type="entry name" value="P-loop_NTPase"/>
</dbReference>
<dbReference type="InterPro" id="IPR004548">
    <property type="entry name" value="PrfC"/>
</dbReference>
<dbReference type="InterPro" id="IPR032090">
    <property type="entry name" value="RF3_C"/>
</dbReference>
<dbReference type="InterPro" id="IPR038467">
    <property type="entry name" value="RF3_dom_3_sf"/>
</dbReference>
<dbReference type="InterPro" id="IPR041732">
    <property type="entry name" value="RF3_GTP-bd"/>
</dbReference>
<dbReference type="InterPro" id="IPR005225">
    <property type="entry name" value="Small_GTP-bd"/>
</dbReference>
<dbReference type="InterPro" id="IPR000795">
    <property type="entry name" value="T_Tr_GTP-bd_dom"/>
</dbReference>
<dbReference type="InterPro" id="IPR009000">
    <property type="entry name" value="Transl_B-barrel_sf"/>
</dbReference>
<dbReference type="NCBIfam" id="TIGR00503">
    <property type="entry name" value="prfC"/>
    <property type="match status" value="1"/>
</dbReference>
<dbReference type="NCBIfam" id="NF001964">
    <property type="entry name" value="PRK00741.1"/>
    <property type="match status" value="1"/>
</dbReference>
<dbReference type="NCBIfam" id="TIGR00231">
    <property type="entry name" value="small_GTP"/>
    <property type="match status" value="1"/>
</dbReference>
<dbReference type="PANTHER" id="PTHR43556">
    <property type="entry name" value="PEPTIDE CHAIN RELEASE FACTOR RF3"/>
    <property type="match status" value="1"/>
</dbReference>
<dbReference type="PANTHER" id="PTHR43556:SF2">
    <property type="entry name" value="PEPTIDE CHAIN RELEASE FACTOR RF3"/>
    <property type="match status" value="1"/>
</dbReference>
<dbReference type="Pfam" id="PF22042">
    <property type="entry name" value="EF-G_D2"/>
    <property type="match status" value="1"/>
</dbReference>
<dbReference type="Pfam" id="PF00009">
    <property type="entry name" value="GTP_EFTU"/>
    <property type="match status" value="1"/>
</dbReference>
<dbReference type="Pfam" id="PF16658">
    <property type="entry name" value="RF3_C"/>
    <property type="match status" value="1"/>
</dbReference>
<dbReference type="PRINTS" id="PR00315">
    <property type="entry name" value="ELONGATNFCT"/>
</dbReference>
<dbReference type="SUPFAM" id="SSF54980">
    <property type="entry name" value="EF-G C-terminal domain-like"/>
    <property type="match status" value="1"/>
</dbReference>
<dbReference type="SUPFAM" id="SSF52540">
    <property type="entry name" value="P-loop containing nucleoside triphosphate hydrolases"/>
    <property type="match status" value="1"/>
</dbReference>
<dbReference type="SUPFAM" id="SSF50447">
    <property type="entry name" value="Translation proteins"/>
    <property type="match status" value="1"/>
</dbReference>
<dbReference type="PROSITE" id="PS00301">
    <property type="entry name" value="G_TR_1"/>
    <property type="match status" value="1"/>
</dbReference>
<dbReference type="PROSITE" id="PS51722">
    <property type="entry name" value="G_TR_2"/>
    <property type="match status" value="1"/>
</dbReference>
<protein>
    <recommendedName>
        <fullName>Peptide chain release factor 3</fullName>
        <shortName>RF-3</shortName>
    </recommendedName>
</protein>
<sequence>MTLSPYLQEVAKRRTFAIISHPDAGKTTITEKVLLFGQAIQTAGTVKGRGSNQHAKSDWMEMEKQRGISITTSVMQFPYHDCLVNLLDTPGHEDFSEDTYRTLTAVDCCLMVIDAAKGVEDRTRKLMEVTRLRDTPILTFMNKLDRDIRDPMELLDEVENELKIGCAPITWPIGCGKLFKGVYHLYKDETYLYQSGKGHTIQEVRIVKGLNNPDLDAAVGEDLAQQLRDELELVKGASNEFDKELFLAGEITPVFFGTALGNFGVDHMLDGLVEWAPAPMPRQTDTRTVEASEDKFTGFVFKIQANMDPKHRDRVAFMRVVSGKYEKGMKLRQVRTAKDVVISDALTFMAGDRSHVEEAYPGDILGLHNHGTIQIGDTFTQGEMMKFTGIPNFAPELFRRIRLKDPLKQKQLLKGLVQLSEEGAVQVFRPISNNDLIVGAVGVLQFDVVVARLKSEYNVEAVYESVNVATARWVECADAKKFEEFKRKNESQLALDGGDNLAYIATSMVNLRLAQERYPDVQFHQTREH</sequence>
<gene>
    <name type="primary">prfC</name>
    <name type="ordered locus">c5456</name>
</gene>